<protein>
    <recommendedName>
        <fullName evidence="1">Protein GrpE</fullName>
    </recommendedName>
    <alternativeName>
        <fullName evidence="1">HSP-70 cofactor</fullName>
    </alternativeName>
</protein>
<gene>
    <name evidence="1" type="primary">grpE</name>
    <name type="ordered locus">SAUSA300_1541</name>
</gene>
<accession>Q2FGE2</accession>
<sequence length="208" mass="24008">MTNKDESVEKNTESTVEETNVKQNIDDSVEQAEESKGHLQDEAIEETSDENVIEEIDPKDQKINELQQLADENEEKYLRLYAEFENYKRRIQKENEINKTYQAQRVLTDILPAIDNIERALQIEGDDETFKSLQKGVQMVHESLINALKDNGLEVIKTEGEAFDPNIHQAVVQDDNPDFESGEITQELQKGYKLKDRVLRPSMVKVNQ</sequence>
<keyword id="KW-0143">Chaperone</keyword>
<keyword id="KW-0963">Cytoplasm</keyword>
<keyword id="KW-0346">Stress response</keyword>
<reference key="1">
    <citation type="journal article" date="2006" name="Lancet">
        <title>Complete genome sequence of USA300, an epidemic clone of community-acquired meticillin-resistant Staphylococcus aureus.</title>
        <authorList>
            <person name="Diep B.A."/>
            <person name="Gill S.R."/>
            <person name="Chang R.F."/>
            <person name="Phan T.H."/>
            <person name="Chen J.H."/>
            <person name="Davidson M.G."/>
            <person name="Lin F."/>
            <person name="Lin J."/>
            <person name="Carleton H.A."/>
            <person name="Mongodin E.F."/>
            <person name="Sensabaugh G.F."/>
            <person name="Perdreau-Remington F."/>
        </authorList>
    </citation>
    <scope>NUCLEOTIDE SEQUENCE [LARGE SCALE GENOMIC DNA]</scope>
    <source>
        <strain>USA300</strain>
    </source>
</reference>
<feature type="chain" id="PRO_1000053646" description="Protein GrpE">
    <location>
        <begin position="1"/>
        <end position="208"/>
    </location>
</feature>
<feature type="region of interest" description="Disordered" evidence="2">
    <location>
        <begin position="1"/>
        <end position="51"/>
    </location>
</feature>
<feature type="compositionally biased region" description="Basic and acidic residues" evidence="2">
    <location>
        <begin position="1"/>
        <end position="12"/>
    </location>
</feature>
<feature type="compositionally biased region" description="Polar residues" evidence="2">
    <location>
        <begin position="13"/>
        <end position="23"/>
    </location>
</feature>
<feature type="compositionally biased region" description="Acidic residues" evidence="2">
    <location>
        <begin position="42"/>
        <end position="51"/>
    </location>
</feature>
<evidence type="ECO:0000255" key="1">
    <source>
        <dbReference type="HAMAP-Rule" id="MF_01151"/>
    </source>
</evidence>
<evidence type="ECO:0000256" key="2">
    <source>
        <dbReference type="SAM" id="MobiDB-lite"/>
    </source>
</evidence>
<dbReference type="EMBL" id="CP000255">
    <property type="protein sequence ID" value="ABD22101.1"/>
    <property type="molecule type" value="Genomic_DNA"/>
</dbReference>
<dbReference type="RefSeq" id="WP_000182215.1">
    <property type="nucleotide sequence ID" value="NZ_CP027476.1"/>
</dbReference>
<dbReference type="SMR" id="Q2FGE2"/>
<dbReference type="KEGG" id="saa:SAUSA300_1541"/>
<dbReference type="HOGENOM" id="CLU_057217_6_3_9"/>
<dbReference type="OMA" id="PHRHQAI"/>
<dbReference type="Proteomes" id="UP000001939">
    <property type="component" value="Chromosome"/>
</dbReference>
<dbReference type="GO" id="GO:0005737">
    <property type="term" value="C:cytoplasm"/>
    <property type="evidence" value="ECO:0007669"/>
    <property type="project" value="UniProtKB-SubCell"/>
</dbReference>
<dbReference type="GO" id="GO:0000774">
    <property type="term" value="F:adenyl-nucleotide exchange factor activity"/>
    <property type="evidence" value="ECO:0007669"/>
    <property type="project" value="InterPro"/>
</dbReference>
<dbReference type="GO" id="GO:0042803">
    <property type="term" value="F:protein homodimerization activity"/>
    <property type="evidence" value="ECO:0007669"/>
    <property type="project" value="InterPro"/>
</dbReference>
<dbReference type="GO" id="GO:0051087">
    <property type="term" value="F:protein-folding chaperone binding"/>
    <property type="evidence" value="ECO:0007669"/>
    <property type="project" value="InterPro"/>
</dbReference>
<dbReference type="GO" id="GO:0051082">
    <property type="term" value="F:unfolded protein binding"/>
    <property type="evidence" value="ECO:0007669"/>
    <property type="project" value="TreeGrafter"/>
</dbReference>
<dbReference type="GO" id="GO:0006457">
    <property type="term" value="P:protein folding"/>
    <property type="evidence" value="ECO:0007669"/>
    <property type="project" value="InterPro"/>
</dbReference>
<dbReference type="CDD" id="cd00446">
    <property type="entry name" value="GrpE"/>
    <property type="match status" value="1"/>
</dbReference>
<dbReference type="FunFam" id="2.30.22.10:FF:000001">
    <property type="entry name" value="Protein GrpE"/>
    <property type="match status" value="1"/>
</dbReference>
<dbReference type="FunFam" id="3.90.20.20:FF:000002">
    <property type="entry name" value="Protein GrpE"/>
    <property type="match status" value="1"/>
</dbReference>
<dbReference type="Gene3D" id="3.90.20.20">
    <property type="match status" value="1"/>
</dbReference>
<dbReference type="Gene3D" id="2.30.22.10">
    <property type="entry name" value="Head domain of nucleotide exchange factor GrpE"/>
    <property type="match status" value="1"/>
</dbReference>
<dbReference type="HAMAP" id="MF_01151">
    <property type="entry name" value="GrpE"/>
    <property type="match status" value="1"/>
</dbReference>
<dbReference type="InterPro" id="IPR000740">
    <property type="entry name" value="GrpE"/>
</dbReference>
<dbReference type="InterPro" id="IPR013805">
    <property type="entry name" value="GrpE_coiled_coil"/>
</dbReference>
<dbReference type="InterPro" id="IPR009012">
    <property type="entry name" value="GrpE_head"/>
</dbReference>
<dbReference type="NCBIfam" id="NF010738">
    <property type="entry name" value="PRK14140.1"/>
    <property type="match status" value="1"/>
</dbReference>
<dbReference type="PANTHER" id="PTHR21237">
    <property type="entry name" value="GRPE PROTEIN"/>
    <property type="match status" value="1"/>
</dbReference>
<dbReference type="PANTHER" id="PTHR21237:SF23">
    <property type="entry name" value="GRPE PROTEIN HOMOLOG, MITOCHONDRIAL"/>
    <property type="match status" value="1"/>
</dbReference>
<dbReference type="Pfam" id="PF01025">
    <property type="entry name" value="GrpE"/>
    <property type="match status" value="1"/>
</dbReference>
<dbReference type="PRINTS" id="PR00773">
    <property type="entry name" value="GRPEPROTEIN"/>
</dbReference>
<dbReference type="SUPFAM" id="SSF58014">
    <property type="entry name" value="Coiled-coil domain of nucleotide exchange factor GrpE"/>
    <property type="match status" value="1"/>
</dbReference>
<dbReference type="SUPFAM" id="SSF51064">
    <property type="entry name" value="Head domain of nucleotide exchange factor GrpE"/>
    <property type="match status" value="1"/>
</dbReference>
<dbReference type="PROSITE" id="PS01071">
    <property type="entry name" value="GRPE"/>
    <property type="match status" value="1"/>
</dbReference>
<organism>
    <name type="scientific">Staphylococcus aureus (strain USA300)</name>
    <dbReference type="NCBI Taxonomy" id="367830"/>
    <lineage>
        <taxon>Bacteria</taxon>
        <taxon>Bacillati</taxon>
        <taxon>Bacillota</taxon>
        <taxon>Bacilli</taxon>
        <taxon>Bacillales</taxon>
        <taxon>Staphylococcaceae</taxon>
        <taxon>Staphylococcus</taxon>
    </lineage>
</organism>
<name>GRPE_STAA3</name>
<comment type="function">
    <text evidence="1">Participates actively in the response to hyperosmotic and heat shock by preventing the aggregation of stress-denatured proteins, in association with DnaK and GrpE. It is the nucleotide exchange factor for DnaK and may function as a thermosensor. Unfolded proteins bind initially to DnaJ; upon interaction with the DnaJ-bound protein, DnaK hydrolyzes its bound ATP, resulting in the formation of a stable complex. GrpE releases ADP from DnaK; ATP binding to DnaK triggers the release of the substrate protein, thus completing the reaction cycle. Several rounds of ATP-dependent interactions between DnaJ, DnaK and GrpE are required for fully efficient folding.</text>
</comment>
<comment type="subunit">
    <text evidence="1">Homodimer.</text>
</comment>
<comment type="subcellular location">
    <subcellularLocation>
        <location evidence="1">Cytoplasm</location>
    </subcellularLocation>
</comment>
<comment type="similarity">
    <text evidence="1">Belongs to the GrpE family.</text>
</comment>
<proteinExistence type="inferred from homology"/>